<feature type="chain" id="PRO_0000236690" description="Tyrosine--tRNA ligase">
    <location>
        <begin position="1"/>
        <end position="398"/>
    </location>
</feature>
<feature type="domain" description="S4 RNA-binding" evidence="1">
    <location>
        <begin position="334"/>
        <end position="398"/>
    </location>
</feature>
<feature type="short sequence motif" description="'HIGH' region">
    <location>
        <begin position="48"/>
        <end position="57"/>
    </location>
</feature>
<feature type="short sequence motif" description="'KMSKS' region">
    <location>
        <begin position="235"/>
        <end position="239"/>
    </location>
</feature>
<feature type="binding site" evidence="1">
    <location>
        <position position="238"/>
    </location>
    <ligand>
        <name>ATP</name>
        <dbReference type="ChEBI" id="CHEBI:30616"/>
    </ligand>
</feature>
<dbReference type="EC" id="6.1.1.1" evidence="1"/>
<dbReference type="EMBL" id="CP000117">
    <property type="protein sequence ID" value="ABA20549.1"/>
    <property type="molecule type" value="Genomic_DNA"/>
</dbReference>
<dbReference type="SMR" id="Q3MEN7"/>
<dbReference type="STRING" id="240292.Ava_0925"/>
<dbReference type="KEGG" id="ava:Ava_0925"/>
<dbReference type="eggNOG" id="COG0162">
    <property type="taxonomic scope" value="Bacteria"/>
</dbReference>
<dbReference type="HOGENOM" id="CLU_024003_5_0_3"/>
<dbReference type="Proteomes" id="UP000002533">
    <property type="component" value="Chromosome"/>
</dbReference>
<dbReference type="GO" id="GO:0005829">
    <property type="term" value="C:cytosol"/>
    <property type="evidence" value="ECO:0007669"/>
    <property type="project" value="TreeGrafter"/>
</dbReference>
<dbReference type="GO" id="GO:0005524">
    <property type="term" value="F:ATP binding"/>
    <property type="evidence" value="ECO:0007669"/>
    <property type="project" value="UniProtKB-UniRule"/>
</dbReference>
<dbReference type="GO" id="GO:0003723">
    <property type="term" value="F:RNA binding"/>
    <property type="evidence" value="ECO:0007669"/>
    <property type="project" value="UniProtKB-KW"/>
</dbReference>
<dbReference type="GO" id="GO:0004831">
    <property type="term" value="F:tyrosine-tRNA ligase activity"/>
    <property type="evidence" value="ECO:0007669"/>
    <property type="project" value="UniProtKB-UniRule"/>
</dbReference>
<dbReference type="GO" id="GO:0006437">
    <property type="term" value="P:tyrosyl-tRNA aminoacylation"/>
    <property type="evidence" value="ECO:0007669"/>
    <property type="project" value="UniProtKB-UniRule"/>
</dbReference>
<dbReference type="CDD" id="cd00805">
    <property type="entry name" value="TyrRS_core"/>
    <property type="match status" value="1"/>
</dbReference>
<dbReference type="Gene3D" id="3.40.50.620">
    <property type="entry name" value="HUPs"/>
    <property type="match status" value="1"/>
</dbReference>
<dbReference type="Gene3D" id="3.10.290.10">
    <property type="entry name" value="RNA-binding S4 domain"/>
    <property type="match status" value="1"/>
</dbReference>
<dbReference type="Gene3D" id="1.10.240.10">
    <property type="entry name" value="Tyrosyl-Transfer RNA Synthetase"/>
    <property type="match status" value="1"/>
</dbReference>
<dbReference type="HAMAP" id="MF_02007">
    <property type="entry name" value="Tyr_tRNA_synth_type2"/>
    <property type="match status" value="1"/>
</dbReference>
<dbReference type="InterPro" id="IPR001412">
    <property type="entry name" value="aa-tRNA-synth_I_CS"/>
</dbReference>
<dbReference type="InterPro" id="IPR002305">
    <property type="entry name" value="aa-tRNA-synth_Ic"/>
</dbReference>
<dbReference type="InterPro" id="IPR014729">
    <property type="entry name" value="Rossmann-like_a/b/a_fold"/>
</dbReference>
<dbReference type="InterPro" id="IPR036986">
    <property type="entry name" value="S4_RNA-bd_sf"/>
</dbReference>
<dbReference type="InterPro" id="IPR054608">
    <property type="entry name" value="SYY-like_C"/>
</dbReference>
<dbReference type="InterPro" id="IPR002307">
    <property type="entry name" value="Tyr-tRNA-ligase"/>
</dbReference>
<dbReference type="InterPro" id="IPR024088">
    <property type="entry name" value="Tyr-tRNA-ligase_bac-type"/>
</dbReference>
<dbReference type="InterPro" id="IPR024108">
    <property type="entry name" value="Tyr-tRNA-ligase_bac_2"/>
</dbReference>
<dbReference type="NCBIfam" id="TIGR00234">
    <property type="entry name" value="tyrS"/>
    <property type="match status" value="1"/>
</dbReference>
<dbReference type="PANTHER" id="PTHR11766:SF1">
    <property type="entry name" value="TYROSINE--TRNA LIGASE"/>
    <property type="match status" value="1"/>
</dbReference>
<dbReference type="PANTHER" id="PTHR11766">
    <property type="entry name" value="TYROSYL-TRNA SYNTHETASE"/>
    <property type="match status" value="1"/>
</dbReference>
<dbReference type="Pfam" id="PF22421">
    <property type="entry name" value="SYY_C-terminal"/>
    <property type="match status" value="1"/>
</dbReference>
<dbReference type="Pfam" id="PF00579">
    <property type="entry name" value="tRNA-synt_1b"/>
    <property type="match status" value="1"/>
</dbReference>
<dbReference type="PRINTS" id="PR01040">
    <property type="entry name" value="TRNASYNTHTYR"/>
</dbReference>
<dbReference type="SUPFAM" id="SSF55174">
    <property type="entry name" value="Alpha-L RNA-binding motif"/>
    <property type="match status" value="1"/>
</dbReference>
<dbReference type="SUPFAM" id="SSF52374">
    <property type="entry name" value="Nucleotidylyl transferase"/>
    <property type="match status" value="1"/>
</dbReference>
<dbReference type="PROSITE" id="PS00178">
    <property type="entry name" value="AA_TRNA_LIGASE_I"/>
    <property type="match status" value="1"/>
</dbReference>
<dbReference type="PROSITE" id="PS50889">
    <property type="entry name" value="S4"/>
    <property type="match status" value="1"/>
</dbReference>
<comment type="function">
    <text evidence="1">Catalyzes the attachment of tyrosine to tRNA(Tyr) in a two-step reaction: tyrosine is first activated by ATP to form Tyr-AMP and then transferred to the acceptor end of tRNA(Tyr).</text>
</comment>
<comment type="catalytic activity">
    <reaction evidence="1">
        <text>tRNA(Tyr) + L-tyrosine + ATP = L-tyrosyl-tRNA(Tyr) + AMP + diphosphate + H(+)</text>
        <dbReference type="Rhea" id="RHEA:10220"/>
        <dbReference type="Rhea" id="RHEA-COMP:9706"/>
        <dbReference type="Rhea" id="RHEA-COMP:9707"/>
        <dbReference type="ChEBI" id="CHEBI:15378"/>
        <dbReference type="ChEBI" id="CHEBI:30616"/>
        <dbReference type="ChEBI" id="CHEBI:33019"/>
        <dbReference type="ChEBI" id="CHEBI:58315"/>
        <dbReference type="ChEBI" id="CHEBI:78442"/>
        <dbReference type="ChEBI" id="CHEBI:78536"/>
        <dbReference type="ChEBI" id="CHEBI:456215"/>
        <dbReference type="EC" id="6.1.1.1"/>
    </reaction>
</comment>
<comment type="subunit">
    <text evidence="1">Homodimer.</text>
</comment>
<comment type="subcellular location">
    <subcellularLocation>
        <location evidence="1">Cytoplasm</location>
    </subcellularLocation>
</comment>
<comment type="similarity">
    <text evidence="1">Belongs to the class-I aminoacyl-tRNA synthetase family. TyrS type 2 subfamily.</text>
</comment>
<name>SYY_TRIV2</name>
<proteinExistence type="inferred from homology"/>
<accession>Q3MEN7</accession>
<reference key="1">
    <citation type="journal article" date="2014" name="Stand. Genomic Sci.">
        <title>Complete genome sequence of Anabaena variabilis ATCC 29413.</title>
        <authorList>
            <person name="Thiel T."/>
            <person name="Pratte B.S."/>
            <person name="Zhong J."/>
            <person name="Goodwin L."/>
            <person name="Copeland A."/>
            <person name="Lucas S."/>
            <person name="Han C."/>
            <person name="Pitluck S."/>
            <person name="Land M.L."/>
            <person name="Kyrpides N.C."/>
            <person name="Woyke T."/>
        </authorList>
    </citation>
    <scope>NUCLEOTIDE SEQUENCE [LARGE SCALE GENOMIC DNA]</scope>
    <source>
        <strain>ATCC 29413 / PCC 7937</strain>
    </source>
</reference>
<keyword id="KW-0030">Aminoacyl-tRNA synthetase</keyword>
<keyword id="KW-0067">ATP-binding</keyword>
<keyword id="KW-0963">Cytoplasm</keyword>
<keyword id="KW-0436">Ligase</keyword>
<keyword id="KW-0547">Nucleotide-binding</keyword>
<keyword id="KW-0648">Protein biosynthesis</keyword>
<keyword id="KW-0694">RNA-binding</keyword>
<sequence length="398" mass="44447">MAENFSWLHRGIAEVFPQPTDAESDIESLEKRLATTDRPLRVKYGIDPTGADIHLGHSIPMRKLRGFQDAGHTAVLIIGDFTARIGDPTGKSEMRRQLTEEDVKQNAQTYLDQVRPILDFDTPGRLEVRYNSEWLSRLDLGKITELLATMTVGQMLAKEGFADRYKKENPIFLHEFLYPLMQGYDSVAIEADVELGGTDQKFNIAVGRDLQRHFGQKPQFGVLLPILIGTDGVQKMSKSLGNYVSLSEHPGQKYQKLQGVPDQMLEQYFELLTDLPIDKLPANPRDRQMLLAWEIVKQYHGEQAAQEAKEAAQSGGKEGAVPEFSLAGVPQFPVKLAYLLGATGLCKSTGEGKRKIQEGGVRLDGDRISDADTIFQQPDELQGRVLQVGKNKFVRLVL</sequence>
<evidence type="ECO:0000255" key="1">
    <source>
        <dbReference type="HAMAP-Rule" id="MF_02007"/>
    </source>
</evidence>
<protein>
    <recommendedName>
        <fullName evidence="1">Tyrosine--tRNA ligase</fullName>
        <ecNumber evidence="1">6.1.1.1</ecNumber>
    </recommendedName>
    <alternativeName>
        <fullName evidence="1">Tyrosyl-tRNA synthetase</fullName>
        <shortName evidence="1">TyrRS</shortName>
    </alternativeName>
</protein>
<organism>
    <name type="scientific">Trichormus variabilis (strain ATCC 29413 / PCC 7937)</name>
    <name type="common">Anabaena variabilis</name>
    <dbReference type="NCBI Taxonomy" id="240292"/>
    <lineage>
        <taxon>Bacteria</taxon>
        <taxon>Bacillati</taxon>
        <taxon>Cyanobacteriota</taxon>
        <taxon>Cyanophyceae</taxon>
        <taxon>Nostocales</taxon>
        <taxon>Nostocaceae</taxon>
        <taxon>Trichormus</taxon>
    </lineage>
</organism>
<gene>
    <name evidence="1" type="primary">tyrS</name>
    <name type="ordered locus">Ava_0925</name>
</gene>